<keyword id="KW-0046">Antibiotic resistance</keyword>
<keyword id="KW-0378">Hydrolase</keyword>
<keyword id="KW-0479">Metal-binding</keyword>
<keyword id="KW-0574">Periplasm</keyword>
<keyword id="KW-0732">Signal</keyword>
<keyword id="KW-0862">Zinc</keyword>
<organism evidence="8">
    <name type="scientific">Chryseobacterium indologenes</name>
    <name type="common">Flavobacterium indologenes</name>
    <dbReference type="NCBI Taxonomy" id="253"/>
    <lineage>
        <taxon>Bacteria</taxon>
        <taxon>Pseudomonadati</taxon>
        <taxon>Bacteroidota</taxon>
        <taxon>Flavobacteriia</taxon>
        <taxon>Flavobacteriales</taxon>
        <taxon>Weeksellaceae</taxon>
        <taxon>Chryseobacterium group</taxon>
        <taxon>Chryseobacterium</taxon>
    </lineage>
</organism>
<protein>
    <recommendedName>
        <fullName evidence="7">Metallo-beta-lactamase IND-1</fullName>
        <ecNumber evidence="3">3.5.2.6</ecNumber>
    </recommendedName>
    <alternativeName>
        <fullName evidence="5">Carbapenem-hydrolyzing beta-lactamase IND-1</fullName>
    </alternativeName>
    <alternativeName>
        <fullName evidence="5">blaIND-1</fullName>
        <shortName evidence="5">IND-1</shortName>
    </alternativeName>
</protein>
<sequence length="239" mass="26843">MKKSIRFFIVSILLSPFASAQVKDFVIEPPIKNNLHIYKTFGVFGGKEYSANSMYLVTKKGVVLFDVPWEKIQYQSLMDTIKKRHNLPVVAVFATHSHDDRAGDLSFFNNKGIKTYATAKTNEFLKKDGKATSTEIIKTGKPYRIGGEEFVVDFLGEGHTADNVVVWFPKYNVLDGGCLVKSNSATDLGYIKEANVEQWPKTINKLKAKYSKATLIIPGHDEWKGGGHVEHTLELLNKK</sequence>
<feature type="signal peptide" evidence="2">
    <location>
        <begin position="1"/>
        <end position="20"/>
    </location>
</feature>
<feature type="chain" id="PRO_5004336191" description="Metallo-beta-lactamase IND-1" evidence="2">
    <location>
        <begin position="21"/>
        <end position="239"/>
    </location>
</feature>
<feature type="binding site" evidence="1">
    <location>
        <position position="96"/>
    </location>
    <ligand>
        <name>Zn(2+)</name>
        <dbReference type="ChEBI" id="CHEBI:29105"/>
        <label>1</label>
    </ligand>
</feature>
<feature type="binding site" evidence="1">
    <location>
        <position position="98"/>
    </location>
    <ligand>
        <name>Zn(2+)</name>
        <dbReference type="ChEBI" id="CHEBI:29105"/>
        <label>1</label>
    </ligand>
</feature>
<feature type="binding site" evidence="1">
    <location>
        <position position="100"/>
    </location>
    <ligand>
        <name>Zn(2+)</name>
        <dbReference type="ChEBI" id="CHEBI:29105"/>
        <label>2</label>
    </ligand>
</feature>
<feature type="binding site" evidence="1">
    <location>
        <position position="159"/>
    </location>
    <ligand>
        <name>Zn(2+)</name>
        <dbReference type="ChEBI" id="CHEBI:29105"/>
        <label>1</label>
    </ligand>
</feature>
<feature type="binding site" evidence="1">
    <location>
        <position position="178"/>
    </location>
    <ligand>
        <name>Zn(2+)</name>
        <dbReference type="ChEBI" id="CHEBI:29105"/>
        <label>2</label>
    </ligand>
</feature>
<feature type="binding site" evidence="1">
    <location>
        <position position="181"/>
    </location>
    <ligand>
        <name>a beta-lactam</name>
        <dbReference type="ChEBI" id="CHEBI:35627"/>
    </ligand>
</feature>
<feature type="binding site" evidence="1">
    <location>
        <position position="220"/>
    </location>
    <ligand>
        <name>Zn(2+)</name>
        <dbReference type="ChEBI" id="CHEBI:29105"/>
        <label>2</label>
    </ligand>
</feature>
<gene>
    <name evidence="5" type="primary">IND-1</name>
    <name evidence="8" type="synonym">ind1</name>
</gene>
<accession>Q9X482</accession>
<comment type="function">
    <text evidence="3">Class B beta-lactamase which confers resistance to the beta-lactam antibiotics, including penicillins, cephalosporins and carbapenems (PubMed:10077836). Acts via hydrolysis of the beta-lactam ring (PubMed:10077836). Has penicillin-, cephalosporin- and carbapenem-hydrolyzing activities (PubMed:10077836).</text>
</comment>
<comment type="catalytic activity">
    <reaction evidence="3">
        <text>a beta-lactam + H2O = a substituted beta-amino acid</text>
        <dbReference type="Rhea" id="RHEA:20401"/>
        <dbReference type="ChEBI" id="CHEBI:15377"/>
        <dbReference type="ChEBI" id="CHEBI:35627"/>
        <dbReference type="ChEBI" id="CHEBI:140347"/>
        <dbReference type="EC" id="3.5.2.6"/>
    </reaction>
</comment>
<comment type="cofactor">
    <cofactor evidence="1">
        <name>Zn(2+)</name>
        <dbReference type="ChEBI" id="CHEBI:29105"/>
    </cofactor>
    <text evidence="1">Binds 2 Zn(2+) ions per subunit.</text>
</comment>
<comment type="activity regulation">
    <text evidence="3">Inhibited by chelating agents such as EDTA (PubMed:10077836). Not susceptible to inactivation by the beta-lactamase-blocking agent clavulanic acid (PubMed:10077836).</text>
</comment>
<comment type="biophysicochemical properties">
    <kinetics>
        <KM evidence="3">26.4 uM for benzylpenicillin (at pH 7.0 and 30 degrees Celsius)</KM>
        <KM evidence="3">363 uM for ampicillin (at pH 7.0 and 30 degrees Celsius)</KM>
        <KM evidence="3">365 uM for piperacillin (at pH 7.0 and 30 degrees Celsius)</KM>
        <KM evidence="3">59.5 uM for cefotaxime (at pH 7.0 and 30 degrees Celsius)</KM>
        <KM evidence="3">765 uM for ceftazidime (at pH 7.0 and 30 degrees Celsius)</KM>
        <KM evidence="3">78.9 uM for cefalotin (at pH 7.0 and 30 degrees Celsius)</KM>
        <KM evidence="3">198 uM for imipenem (at pH 7.0 and 30 degrees Celsius)</KM>
        <KM evidence="3">845 uM for meropenem (at pH 7.0 and 30 degrees Celsius)</KM>
        <KM evidence="3">30.8 uM for cefoxitin (at pH 7.0 and 30 degrees Celsius)</KM>
    </kinetics>
</comment>
<comment type="subunit">
    <text evidence="1">Monomer.</text>
</comment>
<comment type="subcellular location">
    <subcellularLocation>
        <location evidence="1">Periplasm</location>
    </subcellularLocation>
</comment>
<comment type="miscellaneous">
    <text evidence="4">The class B beta-lactamase family has a specific amino-acid numbering system known as BBL, for standard numbering of class B beta-lactamases. A multiple sequence alignment was used to derive a consensus sequence and then the consensus was numbered taking into account insertions and deletions. This allows use of identical numbers, e.g. for active site residues, despite differences in protein length. UniProt always uses natural numbering of residues, hence there appear to be differences in numbering between this entry and some papers.</text>
</comment>
<comment type="similarity">
    <text evidence="6">Belongs to the metallo-beta-lactamase superfamily. Class-B beta-lactamase family.</text>
</comment>
<proteinExistence type="evidence at protein level"/>
<dbReference type="EC" id="3.5.2.6" evidence="3"/>
<dbReference type="EMBL" id="AF099139">
    <property type="protein sequence ID" value="AAD20273.1"/>
    <property type="molecule type" value="Genomic_DNA"/>
</dbReference>
<dbReference type="RefSeq" id="WP_063860620.1">
    <property type="nucleotide sequence ID" value="NG_049224.1"/>
</dbReference>
<dbReference type="SMR" id="Q9X482"/>
<dbReference type="CARD" id="ARO:3002256">
    <property type="molecule name" value="IND-1"/>
    <property type="mechanism identifier" value="ARO:0001004"/>
    <property type="mechanism name" value="antibiotic inactivation"/>
</dbReference>
<dbReference type="KEGG" id="ag:AAD20273"/>
<dbReference type="GO" id="GO:0042597">
    <property type="term" value="C:periplasmic space"/>
    <property type="evidence" value="ECO:0007669"/>
    <property type="project" value="UniProtKB-SubCell"/>
</dbReference>
<dbReference type="GO" id="GO:0008800">
    <property type="term" value="F:beta-lactamase activity"/>
    <property type="evidence" value="ECO:0007669"/>
    <property type="project" value="UniProtKB-EC"/>
</dbReference>
<dbReference type="GO" id="GO:0008270">
    <property type="term" value="F:zinc ion binding"/>
    <property type="evidence" value="ECO:0007669"/>
    <property type="project" value="InterPro"/>
</dbReference>
<dbReference type="GO" id="GO:0017001">
    <property type="term" value="P:antibiotic catabolic process"/>
    <property type="evidence" value="ECO:0007669"/>
    <property type="project" value="InterPro"/>
</dbReference>
<dbReference type="GO" id="GO:0046677">
    <property type="term" value="P:response to antibiotic"/>
    <property type="evidence" value="ECO:0007669"/>
    <property type="project" value="UniProtKB-KW"/>
</dbReference>
<dbReference type="CDD" id="cd16317">
    <property type="entry name" value="IND_MBL-B1"/>
    <property type="match status" value="1"/>
</dbReference>
<dbReference type="Gene3D" id="3.60.15.10">
    <property type="entry name" value="Ribonuclease Z/Hydroxyacylglutathione hydrolase-like"/>
    <property type="match status" value="1"/>
</dbReference>
<dbReference type="InterPro" id="IPR001018">
    <property type="entry name" value="Beta-lactamase_class-B_CS"/>
</dbReference>
<dbReference type="InterPro" id="IPR001279">
    <property type="entry name" value="Metallo-B-lactamas"/>
</dbReference>
<dbReference type="InterPro" id="IPR050855">
    <property type="entry name" value="NDM-1-like"/>
</dbReference>
<dbReference type="InterPro" id="IPR036866">
    <property type="entry name" value="RibonucZ/Hydroxyglut_hydro"/>
</dbReference>
<dbReference type="NCBIfam" id="NF012229">
    <property type="entry name" value="bla_class_B_core"/>
    <property type="match status" value="1"/>
</dbReference>
<dbReference type="NCBIfam" id="NF033088">
    <property type="entry name" value="bla_subclass_B1"/>
    <property type="match status" value="1"/>
</dbReference>
<dbReference type="NCBIfam" id="NF012146">
    <property type="entry name" value="blaB-IND-MUS"/>
    <property type="match status" value="1"/>
</dbReference>
<dbReference type="NCBIfam" id="NF012149">
    <property type="entry name" value="blaIND"/>
    <property type="match status" value="1"/>
</dbReference>
<dbReference type="PANTHER" id="PTHR42951:SF4">
    <property type="entry name" value="ACYL-COENZYME A THIOESTERASE MBLAC2"/>
    <property type="match status" value="1"/>
</dbReference>
<dbReference type="PANTHER" id="PTHR42951">
    <property type="entry name" value="METALLO-BETA-LACTAMASE DOMAIN-CONTAINING"/>
    <property type="match status" value="1"/>
</dbReference>
<dbReference type="Pfam" id="PF00753">
    <property type="entry name" value="Lactamase_B"/>
    <property type="match status" value="1"/>
</dbReference>
<dbReference type="SMART" id="SM00849">
    <property type="entry name" value="Lactamase_B"/>
    <property type="match status" value="1"/>
</dbReference>
<dbReference type="SUPFAM" id="SSF56281">
    <property type="entry name" value="Metallo-hydrolase/oxidoreductase"/>
    <property type="match status" value="1"/>
</dbReference>
<dbReference type="PROSITE" id="PS00744">
    <property type="entry name" value="BETA_LACTAMASE_B_2"/>
    <property type="match status" value="1"/>
</dbReference>
<evidence type="ECO:0000250" key="1">
    <source>
        <dbReference type="UniProtKB" id="P25910"/>
    </source>
</evidence>
<evidence type="ECO:0000255" key="2"/>
<evidence type="ECO:0000269" key="3">
    <source>
    </source>
</evidence>
<evidence type="ECO:0000269" key="4">
    <source>
    </source>
</evidence>
<evidence type="ECO:0000303" key="5">
    <source>
    </source>
</evidence>
<evidence type="ECO:0000305" key="6"/>
<evidence type="ECO:0000305" key="7">
    <source>
    </source>
</evidence>
<evidence type="ECO:0000312" key="8">
    <source>
        <dbReference type="EMBL" id="AAD20273.1"/>
    </source>
</evidence>
<name>BLBD1_CHRID</name>
<reference evidence="8" key="1">
    <citation type="journal article" date="1999" name="FEMS Microbiol. Lett.">
        <title>Molecular characterization of a carbapenem-hydrolyzing beta-lactamase from Chryseobacterium (Flavobacterium) indologenes.</title>
        <authorList>
            <person name="Bellais S."/>
            <person name="Leotard S."/>
            <person name="Poirel L."/>
            <person name="Naas T."/>
            <person name="Nordmann P."/>
        </authorList>
    </citation>
    <scope>NUCLEOTIDE SEQUENCE [GENOMIC DNA]</scope>
    <scope>FUNCTION</scope>
    <scope>CATALYTIC ACTIVITY</scope>
    <scope>ACTIVITY REGULATION</scope>
    <scope>BIOPHYSICOCHEMICAL PROPERTIES</scope>
    <source>
        <strain evidence="8">001</strain>
    </source>
</reference>
<reference key="2">
    <citation type="journal article" date="2001" name="Antimicrob. Agents Chemother.">
        <title>Standard numbering scheme for class B beta-lactamases.</title>
        <authorList>
            <consortium name="Metallo-beta-lactamases Working Group"/>
            <person name="Galleni M."/>
            <person name="Lamotte-Brasseur J."/>
            <person name="Rossolini G.M."/>
            <person name="Spencer J."/>
            <person name="Dideberg O."/>
            <person name="Frere J.M."/>
        </authorList>
    </citation>
    <scope>AMINO ACID NUMBERING SCHEME</scope>
</reference>